<evidence type="ECO:0000255" key="1">
    <source>
        <dbReference type="HAMAP-Rule" id="MF_01217"/>
    </source>
</evidence>
<evidence type="ECO:0000255" key="2">
    <source>
        <dbReference type="PROSITE-ProRule" id="PRU00258"/>
    </source>
</evidence>
<protein>
    <recommendedName>
        <fullName evidence="1">Acyl carrier protein</fullName>
        <shortName evidence="1">ACP</shortName>
    </recommendedName>
</protein>
<accession>Q89MV8</accession>
<organism>
    <name type="scientific">Bradyrhizobium diazoefficiens (strain JCM 10833 / BCRC 13528 / IAM 13628 / NBRC 14792 / USDA 110)</name>
    <dbReference type="NCBI Taxonomy" id="224911"/>
    <lineage>
        <taxon>Bacteria</taxon>
        <taxon>Pseudomonadati</taxon>
        <taxon>Pseudomonadota</taxon>
        <taxon>Alphaproteobacteria</taxon>
        <taxon>Hyphomicrobiales</taxon>
        <taxon>Nitrobacteraceae</taxon>
        <taxon>Bradyrhizobium</taxon>
    </lineage>
</organism>
<name>ACP_BRADU</name>
<feature type="chain" id="PRO_0000180114" description="Acyl carrier protein">
    <location>
        <begin position="1"/>
        <end position="79"/>
    </location>
</feature>
<feature type="domain" description="Carrier" evidence="2">
    <location>
        <begin position="2"/>
        <end position="77"/>
    </location>
</feature>
<feature type="modified residue" description="O-(pantetheine 4'-phosphoryl)serine" evidence="2">
    <location>
        <position position="37"/>
    </location>
</feature>
<sequence length="79" mass="8543">MSDIGERVKKIVVEHLGVEPEKVVDAASFIDDLGADSLDTVELVMAFEEEFGCEIPDDAAETILTVGDATKFLEKNAKS</sequence>
<proteinExistence type="inferred from homology"/>
<comment type="function">
    <text evidence="1">Carrier of the growing fatty acid chain in fatty acid biosynthesis.</text>
</comment>
<comment type="pathway">
    <text evidence="1">Lipid metabolism; fatty acid biosynthesis.</text>
</comment>
<comment type="subcellular location">
    <subcellularLocation>
        <location evidence="1">Cytoplasm</location>
    </subcellularLocation>
</comment>
<comment type="PTM">
    <text evidence="1">4'-phosphopantetheine is transferred from CoA to a specific serine of apo-ACP by AcpS. This modification is essential for activity because fatty acids are bound in thioester linkage to the sulfhydryl of the prosthetic group.</text>
</comment>
<comment type="similarity">
    <text evidence="1">Belongs to the acyl carrier protein (ACP) family.</text>
</comment>
<reference key="1">
    <citation type="journal article" date="2002" name="DNA Res.">
        <title>Complete genomic sequence of nitrogen-fixing symbiotic bacterium Bradyrhizobium japonicum USDA110.</title>
        <authorList>
            <person name="Kaneko T."/>
            <person name="Nakamura Y."/>
            <person name="Sato S."/>
            <person name="Minamisawa K."/>
            <person name="Uchiumi T."/>
            <person name="Sasamoto S."/>
            <person name="Watanabe A."/>
            <person name="Idesawa K."/>
            <person name="Iriguchi M."/>
            <person name="Kawashima K."/>
            <person name="Kohara M."/>
            <person name="Matsumoto M."/>
            <person name="Shimpo S."/>
            <person name="Tsuruoka H."/>
            <person name="Wada T."/>
            <person name="Yamada M."/>
            <person name="Tabata S."/>
        </authorList>
    </citation>
    <scope>NUCLEOTIDE SEQUENCE [LARGE SCALE GENOMIC DNA]</scope>
    <source>
        <strain>JCM 10833 / BCRC 13528 / IAM 13628 / NBRC 14792 / USDA 110</strain>
    </source>
</reference>
<dbReference type="EMBL" id="BA000040">
    <property type="protein sequence ID" value="BAC49349.1"/>
    <property type="molecule type" value="Genomic_DNA"/>
</dbReference>
<dbReference type="RefSeq" id="NP_770724.1">
    <property type="nucleotide sequence ID" value="NC_004463.1"/>
</dbReference>
<dbReference type="RefSeq" id="WP_008130699.1">
    <property type="nucleotide sequence ID" value="NZ_CP011360.1"/>
</dbReference>
<dbReference type="SMR" id="Q89MV8"/>
<dbReference type="FunCoup" id="Q89MV8">
    <property type="interactions" value="661"/>
</dbReference>
<dbReference type="STRING" id="224911.AAV28_17450"/>
<dbReference type="EnsemblBacteria" id="BAC49349">
    <property type="protein sequence ID" value="BAC49349"/>
    <property type="gene ID" value="BAC49349"/>
</dbReference>
<dbReference type="KEGG" id="bja:bsr4084"/>
<dbReference type="PATRIC" id="fig|224911.44.peg.3791"/>
<dbReference type="eggNOG" id="COG0236">
    <property type="taxonomic scope" value="Bacteria"/>
</dbReference>
<dbReference type="HOGENOM" id="CLU_108696_5_1_5"/>
<dbReference type="InParanoid" id="Q89MV8"/>
<dbReference type="OrthoDB" id="9804551at2"/>
<dbReference type="PhylomeDB" id="Q89MV8"/>
<dbReference type="UniPathway" id="UPA00094"/>
<dbReference type="Proteomes" id="UP000002526">
    <property type="component" value="Chromosome"/>
</dbReference>
<dbReference type="GO" id="GO:0005829">
    <property type="term" value="C:cytosol"/>
    <property type="evidence" value="ECO:0000318"/>
    <property type="project" value="GO_Central"/>
</dbReference>
<dbReference type="GO" id="GO:0016020">
    <property type="term" value="C:membrane"/>
    <property type="evidence" value="ECO:0007669"/>
    <property type="project" value="GOC"/>
</dbReference>
<dbReference type="GO" id="GO:0000035">
    <property type="term" value="F:acyl binding"/>
    <property type="evidence" value="ECO:0000318"/>
    <property type="project" value="GO_Central"/>
</dbReference>
<dbReference type="GO" id="GO:0000036">
    <property type="term" value="F:acyl carrier activity"/>
    <property type="evidence" value="ECO:0000318"/>
    <property type="project" value="GO_Central"/>
</dbReference>
<dbReference type="GO" id="GO:0031177">
    <property type="term" value="F:phosphopantetheine binding"/>
    <property type="evidence" value="ECO:0007669"/>
    <property type="project" value="InterPro"/>
</dbReference>
<dbReference type="GO" id="GO:0009245">
    <property type="term" value="P:lipid A biosynthetic process"/>
    <property type="evidence" value="ECO:0000318"/>
    <property type="project" value="GO_Central"/>
</dbReference>
<dbReference type="FunFam" id="1.10.1200.10:FF:000012">
    <property type="entry name" value="Acyl carrier protein"/>
    <property type="match status" value="1"/>
</dbReference>
<dbReference type="Gene3D" id="1.10.1200.10">
    <property type="entry name" value="ACP-like"/>
    <property type="match status" value="1"/>
</dbReference>
<dbReference type="HAMAP" id="MF_01217">
    <property type="entry name" value="Acyl_carrier"/>
    <property type="match status" value="1"/>
</dbReference>
<dbReference type="InterPro" id="IPR003231">
    <property type="entry name" value="ACP"/>
</dbReference>
<dbReference type="InterPro" id="IPR036736">
    <property type="entry name" value="ACP-like_sf"/>
</dbReference>
<dbReference type="InterPro" id="IPR020806">
    <property type="entry name" value="PKS_PP-bd"/>
</dbReference>
<dbReference type="InterPro" id="IPR009081">
    <property type="entry name" value="PP-bd_ACP"/>
</dbReference>
<dbReference type="InterPro" id="IPR006162">
    <property type="entry name" value="Ppantetheine_attach_site"/>
</dbReference>
<dbReference type="NCBIfam" id="TIGR00517">
    <property type="entry name" value="acyl_carrier"/>
    <property type="match status" value="1"/>
</dbReference>
<dbReference type="NCBIfam" id="NF002148">
    <property type="entry name" value="PRK00982.1-2"/>
    <property type="match status" value="1"/>
</dbReference>
<dbReference type="NCBIfam" id="NF002149">
    <property type="entry name" value="PRK00982.1-3"/>
    <property type="match status" value="1"/>
</dbReference>
<dbReference type="NCBIfam" id="NF002150">
    <property type="entry name" value="PRK00982.1-4"/>
    <property type="match status" value="1"/>
</dbReference>
<dbReference type="NCBIfam" id="NF002151">
    <property type="entry name" value="PRK00982.1-5"/>
    <property type="match status" value="1"/>
</dbReference>
<dbReference type="PANTHER" id="PTHR20863">
    <property type="entry name" value="ACYL CARRIER PROTEIN"/>
    <property type="match status" value="1"/>
</dbReference>
<dbReference type="PANTHER" id="PTHR20863:SF76">
    <property type="entry name" value="CARRIER DOMAIN-CONTAINING PROTEIN"/>
    <property type="match status" value="1"/>
</dbReference>
<dbReference type="Pfam" id="PF00550">
    <property type="entry name" value="PP-binding"/>
    <property type="match status" value="1"/>
</dbReference>
<dbReference type="SMART" id="SM00823">
    <property type="entry name" value="PKS_PP"/>
    <property type="match status" value="1"/>
</dbReference>
<dbReference type="SUPFAM" id="SSF47336">
    <property type="entry name" value="ACP-like"/>
    <property type="match status" value="1"/>
</dbReference>
<dbReference type="PROSITE" id="PS50075">
    <property type="entry name" value="CARRIER"/>
    <property type="match status" value="1"/>
</dbReference>
<dbReference type="PROSITE" id="PS00012">
    <property type="entry name" value="PHOSPHOPANTETHEINE"/>
    <property type="match status" value="1"/>
</dbReference>
<keyword id="KW-0963">Cytoplasm</keyword>
<keyword id="KW-0275">Fatty acid biosynthesis</keyword>
<keyword id="KW-0276">Fatty acid metabolism</keyword>
<keyword id="KW-0444">Lipid biosynthesis</keyword>
<keyword id="KW-0443">Lipid metabolism</keyword>
<keyword id="KW-0596">Phosphopantetheine</keyword>
<keyword id="KW-0597">Phosphoprotein</keyword>
<keyword id="KW-1185">Reference proteome</keyword>
<gene>
    <name evidence="1" type="primary">acpP</name>
    <name type="ordered locus">bsr4084</name>
</gene>